<name>PFDB_METMP</name>
<protein>
    <recommendedName>
        <fullName evidence="1">Prefoldin subunit beta</fullName>
    </recommendedName>
    <alternativeName>
        <fullName evidence="1">GimC subunit beta</fullName>
    </alternativeName>
</protein>
<accession>Q6M0M5</accession>
<dbReference type="EMBL" id="BX950229">
    <property type="protein sequence ID" value="CAF29801.1"/>
    <property type="molecule type" value="Genomic_DNA"/>
</dbReference>
<dbReference type="RefSeq" id="WP_011170189.1">
    <property type="nucleotide sequence ID" value="NC_005791.1"/>
</dbReference>
<dbReference type="SMR" id="Q6M0M5"/>
<dbReference type="STRING" id="267377.MMP0245"/>
<dbReference type="EnsemblBacteria" id="CAF29801">
    <property type="protein sequence ID" value="CAF29801"/>
    <property type="gene ID" value="MMP0245"/>
</dbReference>
<dbReference type="KEGG" id="mmp:MMP0245"/>
<dbReference type="PATRIC" id="fig|267377.15.peg.248"/>
<dbReference type="eggNOG" id="arCOG01342">
    <property type="taxonomic scope" value="Archaea"/>
</dbReference>
<dbReference type="HOGENOM" id="CLU_131909_0_1_2"/>
<dbReference type="OrthoDB" id="60701at2157"/>
<dbReference type="Proteomes" id="UP000000590">
    <property type="component" value="Chromosome"/>
</dbReference>
<dbReference type="GO" id="GO:0005737">
    <property type="term" value="C:cytoplasm"/>
    <property type="evidence" value="ECO:0007669"/>
    <property type="project" value="UniProtKB-SubCell"/>
</dbReference>
<dbReference type="GO" id="GO:0016272">
    <property type="term" value="C:prefoldin complex"/>
    <property type="evidence" value="ECO:0007669"/>
    <property type="project" value="UniProtKB-UniRule"/>
</dbReference>
<dbReference type="GO" id="GO:0051087">
    <property type="term" value="F:protein-folding chaperone binding"/>
    <property type="evidence" value="ECO:0007669"/>
    <property type="project" value="TreeGrafter"/>
</dbReference>
<dbReference type="GO" id="GO:0051082">
    <property type="term" value="F:unfolded protein binding"/>
    <property type="evidence" value="ECO:0007669"/>
    <property type="project" value="UniProtKB-UniRule"/>
</dbReference>
<dbReference type="GO" id="GO:0051131">
    <property type="term" value="P:chaperone-mediated protein complex assembly"/>
    <property type="evidence" value="ECO:0007669"/>
    <property type="project" value="TreeGrafter"/>
</dbReference>
<dbReference type="GO" id="GO:0006457">
    <property type="term" value="P:protein folding"/>
    <property type="evidence" value="ECO:0007669"/>
    <property type="project" value="UniProtKB-UniRule"/>
</dbReference>
<dbReference type="CDD" id="cd23162">
    <property type="entry name" value="Prefoldin_beta_GimC"/>
    <property type="match status" value="1"/>
</dbReference>
<dbReference type="Gene3D" id="1.10.287.370">
    <property type="match status" value="1"/>
</dbReference>
<dbReference type="HAMAP" id="MF_00307">
    <property type="entry name" value="PfdB"/>
    <property type="match status" value="1"/>
</dbReference>
<dbReference type="InterPro" id="IPR002777">
    <property type="entry name" value="PFD_beta-like"/>
</dbReference>
<dbReference type="InterPro" id="IPR012713">
    <property type="entry name" value="PfdB"/>
</dbReference>
<dbReference type="InterPro" id="IPR009053">
    <property type="entry name" value="Prefoldin"/>
</dbReference>
<dbReference type="NCBIfam" id="TIGR02338">
    <property type="entry name" value="gimC_beta"/>
    <property type="match status" value="1"/>
</dbReference>
<dbReference type="PANTHER" id="PTHR21431">
    <property type="entry name" value="PREFOLDIN SUBUNIT 6"/>
    <property type="match status" value="1"/>
</dbReference>
<dbReference type="PANTHER" id="PTHR21431:SF0">
    <property type="entry name" value="PREFOLDIN SUBUNIT 6"/>
    <property type="match status" value="1"/>
</dbReference>
<dbReference type="Pfam" id="PF01920">
    <property type="entry name" value="Prefoldin_2"/>
    <property type="match status" value="1"/>
</dbReference>
<dbReference type="SUPFAM" id="SSF46579">
    <property type="entry name" value="Prefoldin"/>
    <property type="match status" value="1"/>
</dbReference>
<organism>
    <name type="scientific">Methanococcus maripaludis (strain DSM 14266 / JCM 13030 / NBRC 101832 / S2 / LL)</name>
    <dbReference type="NCBI Taxonomy" id="267377"/>
    <lineage>
        <taxon>Archaea</taxon>
        <taxon>Methanobacteriati</taxon>
        <taxon>Methanobacteriota</taxon>
        <taxon>Methanomada group</taxon>
        <taxon>Methanococci</taxon>
        <taxon>Methanococcales</taxon>
        <taxon>Methanococcaceae</taxon>
        <taxon>Methanococcus</taxon>
    </lineage>
</organism>
<gene>
    <name evidence="1" type="primary">pfdB</name>
    <name type="ordered locus">MMP0245</name>
</gene>
<evidence type="ECO:0000255" key="1">
    <source>
        <dbReference type="HAMAP-Rule" id="MF_00307"/>
    </source>
</evidence>
<keyword id="KW-0143">Chaperone</keyword>
<keyword id="KW-0963">Cytoplasm</keyword>
<keyword id="KW-1185">Reference proteome</keyword>
<reference key="1">
    <citation type="journal article" date="2004" name="J. Bacteriol.">
        <title>Complete genome sequence of the genetically tractable hydrogenotrophic methanogen Methanococcus maripaludis.</title>
        <authorList>
            <person name="Hendrickson E.L."/>
            <person name="Kaul R."/>
            <person name="Zhou Y."/>
            <person name="Bovee D."/>
            <person name="Chapman P."/>
            <person name="Chung J."/>
            <person name="Conway de Macario E."/>
            <person name="Dodsworth J.A."/>
            <person name="Gillett W."/>
            <person name="Graham D.E."/>
            <person name="Hackett M."/>
            <person name="Haydock A.K."/>
            <person name="Kang A."/>
            <person name="Land M.L."/>
            <person name="Levy R."/>
            <person name="Lie T.J."/>
            <person name="Major T.A."/>
            <person name="Moore B.C."/>
            <person name="Porat I."/>
            <person name="Palmeiri A."/>
            <person name="Rouse G."/>
            <person name="Saenphimmachak C."/>
            <person name="Soell D."/>
            <person name="Van Dien S."/>
            <person name="Wang T."/>
            <person name="Whitman W.B."/>
            <person name="Xia Q."/>
            <person name="Zhang Y."/>
            <person name="Larimer F.W."/>
            <person name="Olson M.V."/>
            <person name="Leigh J.A."/>
        </authorList>
    </citation>
    <scope>NUCLEOTIDE SEQUENCE [LARGE SCALE GENOMIC DNA]</scope>
    <source>
        <strain>DSM 14266 / JCM 13030 / NBRC 101832 / S2 / LL</strain>
    </source>
</reference>
<proteinExistence type="inferred from homology"/>
<feature type="chain" id="PRO_0000232442" description="Prefoldin subunit beta">
    <location>
        <begin position="1"/>
        <end position="113"/>
    </location>
</feature>
<comment type="function">
    <text evidence="1">Molecular chaperone capable of stabilizing a range of proteins. Seems to fulfill an ATP-independent, HSP70-like function in archaeal de novo protein folding.</text>
</comment>
<comment type="subunit">
    <text evidence="1">Heterohexamer of two alpha and four beta subunits.</text>
</comment>
<comment type="subcellular location">
    <subcellularLocation>
        <location evidence="1">Cytoplasm</location>
    </subcellularLocation>
</comment>
<comment type="similarity">
    <text evidence="1">Belongs to the prefoldin subunit beta family.</text>
</comment>
<sequence>MELPANVQNQLMQFQQLQQQLQMIMYQKQQFETQLKEMEKAIEEMEKSDSEEVFKMAGGILVKRNKAEVKEELSEKIETLQLRVTTFEKQEEKMQKRYTELQESLQKVMGQGQ</sequence>